<dbReference type="EMBL" id="CH963920">
    <property type="protein sequence ID" value="EDW77623.1"/>
    <property type="molecule type" value="Genomic_DNA"/>
</dbReference>
<dbReference type="RefSeq" id="XP_002066637.2">
    <property type="nucleotide sequence ID" value="XM_002066601.2"/>
</dbReference>
<dbReference type="SMR" id="B4N0L0"/>
<dbReference type="STRING" id="7260.B4N0L0"/>
<dbReference type="EnsemblMetazoa" id="FBtr0255112">
    <property type="protein sequence ID" value="FBpp0253604"/>
    <property type="gene ID" value="FBgn0226421"/>
</dbReference>
<dbReference type="EnsemblMetazoa" id="XM_002066601.4">
    <property type="protein sequence ID" value="XP_002066637.3"/>
    <property type="gene ID" value="LOC6644034"/>
</dbReference>
<dbReference type="GeneID" id="6644034"/>
<dbReference type="KEGG" id="dwi:6644034"/>
<dbReference type="CTD" id="8668"/>
<dbReference type="eggNOG" id="KOG0643">
    <property type="taxonomic scope" value="Eukaryota"/>
</dbReference>
<dbReference type="HOGENOM" id="CLU_043845_0_1_1"/>
<dbReference type="OMA" id="VWFSHNG"/>
<dbReference type="OrthoDB" id="24966at2759"/>
<dbReference type="PhylomeDB" id="B4N0L0"/>
<dbReference type="ChiTaRS" id="Trip1">
    <property type="organism name" value="fly"/>
</dbReference>
<dbReference type="Proteomes" id="UP000007798">
    <property type="component" value="Unassembled WGS sequence"/>
</dbReference>
<dbReference type="GO" id="GO:0016282">
    <property type="term" value="C:eukaryotic 43S preinitiation complex"/>
    <property type="evidence" value="ECO:0007669"/>
    <property type="project" value="UniProtKB-UniRule"/>
</dbReference>
<dbReference type="GO" id="GO:0033290">
    <property type="term" value="C:eukaryotic 48S preinitiation complex"/>
    <property type="evidence" value="ECO:0007669"/>
    <property type="project" value="UniProtKB-UniRule"/>
</dbReference>
<dbReference type="GO" id="GO:0071541">
    <property type="term" value="C:eukaryotic translation initiation factor 3 complex, eIF3m"/>
    <property type="evidence" value="ECO:0007669"/>
    <property type="project" value="TreeGrafter"/>
</dbReference>
<dbReference type="GO" id="GO:0003723">
    <property type="term" value="F:RNA binding"/>
    <property type="evidence" value="ECO:0007669"/>
    <property type="project" value="TreeGrafter"/>
</dbReference>
<dbReference type="GO" id="GO:0003743">
    <property type="term" value="F:translation initiation factor activity"/>
    <property type="evidence" value="ECO:0007669"/>
    <property type="project" value="UniProtKB-UniRule"/>
</dbReference>
<dbReference type="GO" id="GO:0001732">
    <property type="term" value="P:formation of cytoplasmic translation initiation complex"/>
    <property type="evidence" value="ECO:0007669"/>
    <property type="project" value="UniProtKB-UniRule"/>
</dbReference>
<dbReference type="FunFam" id="2.130.10.10:FF:000127">
    <property type="entry name" value="Eukaryotic translation initiation factor 3 subunit I"/>
    <property type="match status" value="1"/>
</dbReference>
<dbReference type="Gene3D" id="2.130.10.10">
    <property type="entry name" value="YVTN repeat-like/Quinoprotein amine dehydrogenase"/>
    <property type="match status" value="1"/>
</dbReference>
<dbReference type="HAMAP" id="MF_03008">
    <property type="entry name" value="eIF3i"/>
    <property type="match status" value="1"/>
</dbReference>
<dbReference type="InterPro" id="IPR027525">
    <property type="entry name" value="eIF3i"/>
</dbReference>
<dbReference type="InterPro" id="IPR015943">
    <property type="entry name" value="WD40/YVTN_repeat-like_dom_sf"/>
</dbReference>
<dbReference type="InterPro" id="IPR019775">
    <property type="entry name" value="WD40_repeat_CS"/>
</dbReference>
<dbReference type="InterPro" id="IPR036322">
    <property type="entry name" value="WD40_repeat_dom_sf"/>
</dbReference>
<dbReference type="InterPro" id="IPR001680">
    <property type="entry name" value="WD40_rpt"/>
</dbReference>
<dbReference type="PANTHER" id="PTHR19877">
    <property type="entry name" value="EUKARYOTIC TRANSLATION INITIATION FACTOR 3 SUBUNIT I"/>
    <property type="match status" value="1"/>
</dbReference>
<dbReference type="PANTHER" id="PTHR19877:SF1">
    <property type="entry name" value="EUKARYOTIC TRANSLATION INITIATION FACTOR 3 SUBUNIT I"/>
    <property type="match status" value="1"/>
</dbReference>
<dbReference type="Pfam" id="PF24805">
    <property type="entry name" value="EIF3I"/>
    <property type="match status" value="1"/>
</dbReference>
<dbReference type="SMART" id="SM00320">
    <property type="entry name" value="WD40"/>
    <property type="match status" value="6"/>
</dbReference>
<dbReference type="SUPFAM" id="SSF50978">
    <property type="entry name" value="WD40 repeat-like"/>
    <property type="match status" value="1"/>
</dbReference>
<dbReference type="PROSITE" id="PS00678">
    <property type="entry name" value="WD_REPEATS_1"/>
    <property type="match status" value="2"/>
</dbReference>
<dbReference type="PROSITE" id="PS50082">
    <property type="entry name" value="WD_REPEATS_2"/>
    <property type="match status" value="5"/>
</dbReference>
<dbReference type="PROSITE" id="PS50294">
    <property type="entry name" value="WD_REPEATS_REGION"/>
    <property type="match status" value="2"/>
</dbReference>
<proteinExistence type="inferred from homology"/>
<sequence length="322" mass="35658">MLQGHERSITQIKYNREGDLLFSSSKDQKPNVWYSLNGERLGTYDGHQGAVWCLDVDWESRKLITAGGDMTAKLWDVEYGTVIASIPTKSSVRTCNFSFSGNQAAYSTDKTMGQSCELFIIDVRNADSTLSEQTPTLRIPMTESKITSMLWGPLDETIITGHDNGNIAIWDVRKGQKVVDSGTDHTGVINDMQLSKDGTMFVTASKDATAKLFDSETLMCLKTYKTERPVNSAAISPILDHVVLGGGQDAMEVTTTSTKAGKFDSRFFHLIYEEEFARLKGHFGPINSLAFHPDGKSYASGGEDGFVRVQSFDSTYFENIFE</sequence>
<gene>
    <name evidence="1" type="primary">eIF3i</name>
    <name evidence="1" type="synonym">eif3-S2</name>
    <name evidence="1" type="synonym">Trip1</name>
    <name type="ORF">GK24461</name>
</gene>
<evidence type="ECO:0000255" key="1">
    <source>
        <dbReference type="HAMAP-Rule" id="MF_03008"/>
    </source>
</evidence>
<organism>
    <name type="scientific">Drosophila willistoni</name>
    <name type="common">Fruit fly</name>
    <dbReference type="NCBI Taxonomy" id="7260"/>
    <lineage>
        <taxon>Eukaryota</taxon>
        <taxon>Metazoa</taxon>
        <taxon>Ecdysozoa</taxon>
        <taxon>Arthropoda</taxon>
        <taxon>Hexapoda</taxon>
        <taxon>Insecta</taxon>
        <taxon>Pterygota</taxon>
        <taxon>Neoptera</taxon>
        <taxon>Endopterygota</taxon>
        <taxon>Diptera</taxon>
        <taxon>Brachycera</taxon>
        <taxon>Muscomorpha</taxon>
        <taxon>Ephydroidea</taxon>
        <taxon>Drosophilidae</taxon>
        <taxon>Drosophila</taxon>
        <taxon>Sophophora</taxon>
    </lineage>
</organism>
<protein>
    <recommendedName>
        <fullName evidence="1">Eukaryotic translation initiation factor 3 subunit I</fullName>
        <shortName evidence="1">eIF3i</shortName>
    </recommendedName>
    <alternativeName>
        <fullName evidence="1">Eukaryotic translation initiation factor 3 subunit 2</fullName>
    </alternativeName>
    <alternativeName>
        <fullName>TRIP-1 homolog</fullName>
    </alternativeName>
</protein>
<reference key="1">
    <citation type="journal article" date="2007" name="Nature">
        <title>Evolution of genes and genomes on the Drosophila phylogeny.</title>
        <authorList>
            <consortium name="Drosophila 12 genomes consortium"/>
        </authorList>
    </citation>
    <scope>NUCLEOTIDE SEQUENCE [LARGE SCALE GENOMIC DNA]</scope>
    <source>
        <strain>Tucson 14030-0811.24</strain>
    </source>
</reference>
<name>EIF3I_DROWI</name>
<accession>B4N0L0</accession>
<keyword id="KW-0963">Cytoplasm</keyword>
<keyword id="KW-0396">Initiation factor</keyword>
<keyword id="KW-0648">Protein biosynthesis</keyword>
<keyword id="KW-1185">Reference proteome</keyword>
<keyword id="KW-0677">Repeat</keyword>
<keyword id="KW-0853">WD repeat</keyword>
<comment type="function">
    <text evidence="1">Component of the eukaryotic translation initiation factor 3 (eIF-3) complex, which is involved in protein synthesis of a specialized repertoire of mRNAs and, together with other initiation factors, stimulates binding of mRNA and methionyl-tRNAi to the 40S ribosome. The eIF-3 complex specifically targets and initiates translation of a subset of mRNAs involved in cell proliferation.</text>
</comment>
<comment type="subunit">
    <text evidence="1">Component of the eukaryotic translation initiation factor 3 (eIF-3) complex. The eIF-3 complex interacts with pix.</text>
</comment>
<comment type="subcellular location">
    <subcellularLocation>
        <location evidence="1">Cytoplasm</location>
    </subcellularLocation>
</comment>
<comment type="similarity">
    <text evidence="1">Belongs to the eIF-3 subunit I family.</text>
</comment>
<feature type="chain" id="PRO_0000365351" description="Eukaryotic translation initiation factor 3 subunit I">
    <location>
        <begin position="1"/>
        <end position="322"/>
    </location>
</feature>
<feature type="repeat" description="WD 1">
    <location>
        <begin position="4"/>
        <end position="43"/>
    </location>
</feature>
<feature type="repeat" description="WD 2">
    <location>
        <begin position="46"/>
        <end position="85"/>
    </location>
</feature>
<feature type="repeat" description="WD 3">
    <location>
        <begin position="141"/>
        <end position="180"/>
    </location>
</feature>
<feature type="repeat" description="WD 4">
    <location>
        <begin position="184"/>
        <end position="223"/>
    </location>
</feature>
<feature type="repeat" description="WD 5">
    <location>
        <begin position="281"/>
        <end position="322"/>
    </location>
</feature>